<accession>B5ZC02</accession>
<reference key="1">
    <citation type="submission" date="2008-10" db="EMBL/GenBank/DDBJ databases">
        <title>Genome sequence of Ureaplasma urealyticum serovar 10 ATCC-33699.</title>
        <authorList>
            <person name="Shrivastava S."/>
            <person name="Methe B.A."/>
            <person name="Glass J."/>
            <person name="White K."/>
            <person name="Duffy L.B."/>
        </authorList>
    </citation>
    <scope>NUCLEOTIDE SEQUENCE [LARGE SCALE GENOMIC DNA]</scope>
    <source>
        <strain>ATCC 33699 / Western</strain>
    </source>
</reference>
<protein>
    <recommendedName>
        <fullName evidence="1">Small ribosomal subunit protein uS4</fullName>
    </recommendedName>
    <alternativeName>
        <fullName evidence="2">30S ribosomal protein S4</fullName>
    </alternativeName>
</protein>
<sequence length="202" mass="23104">MSRYTGSIYKKSRRLGFSLLENNKEFNSGKKRTYGPGQHGNKKVKLSNYGQQLVEKQKLMFLYGLNDRQFRRLYRVALGRPGVLTLNLLQVLESRLDSLVYRAGFAPTRRAARQLVNHSHVLVNGKKVNIPSALVEVGSTIALKEKSLEMPLIKNTLNKPADFIELVDKDKKVAKLSRLPERSELPADVNEAYVVEWYNRLM</sequence>
<organism>
    <name type="scientific">Ureaplasma urealyticum serovar 10 (strain ATCC 33699 / Western)</name>
    <dbReference type="NCBI Taxonomy" id="565575"/>
    <lineage>
        <taxon>Bacteria</taxon>
        <taxon>Bacillati</taxon>
        <taxon>Mycoplasmatota</taxon>
        <taxon>Mycoplasmoidales</taxon>
        <taxon>Mycoplasmoidaceae</taxon>
        <taxon>Ureaplasma</taxon>
    </lineage>
</organism>
<name>RS4_UREU1</name>
<evidence type="ECO:0000255" key="1">
    <source>
        <dbReference type="HAMAP-Rule" id="MF_01306"/>
    </source>
</evidence>
<evidence type="ECO:0000305" key="2"/>
<feature type="chain" id="PRO_1000140814" description="Small ribosomal subunit protein uS4">
    <location>
        <begin position="1"/>
        <end position="202"/>
    </location>
</feature>
<feature type="domain" description="S4 RNA-binding" evidence="1">
    <location>
        <begin position="94"/>
        <end position="157"/>
    </location>
</feature>
<proteinExistence type="inferred from homology"/>
<dbReference type="EMBL" id="CP001184">
    <property type="protein sequence ID" value="ACI59818.1"/>
    <property type="molecule type" value="Genomic_DNA"/>
</dbReference>
<dbReference type="RefSeq" id="WP_004025550.1">
    <property type="nucleotide sequence ID" value="NC_011374.1"/>
</dbReference>
<dbReference type="SMR" id="B5ZC02"/>
<dbReference type="STRING" id="565575.UUR10_0566"/>
<dbReference type="GeneID" id="93849023"/>
<dbReference type="KEGG" id="uue:UUR10_0566"/>
<dbReference type="eggNOG" id="COG0522">
    <property type="taxonomic scope" value="Bacteria"/>
</dbReference>
<dbReference type="HOGENOM" id="CLU_092403_0_1_14"/>
<dbReference type="OrthoDB" id="9803672at2"/>
<dbReference type="Proteomes" id="UP000002018">
    <property type="component" value="Chromosome"/>
</dbReference>
<dbReference type="GO" id="GO:0015935">
    <property type="term" value="C:small ribosomal subunit"/>
    <property type="evidence" value="ECO:0007669"/>
    <property type="project" value="InterPro"/>
</dbReference>
<dbReference type="GO" id="GO:0019843">
    <property type="term" value="F:rRNA binding"/>
    <property type="evidence" value="ECO:0007669"/>
    <property type="project" value="UniProtKB-UniRule"/>
</dbReference>
<dbReference type="GO" id="GO:0003735">
    <property type="term" value="F:structural constituent of ribosome"/>
    <property type="evidence" value="ECO:0007669"/>
    <property type="project" value="InterPro"/>
</dbReference>
<dbReference type="GO" id="GO:0042274">
    <property type="term" value="P:ribosomal small subunit biogenesis"/>
    <property type="evidence" value="ECO:0007669"/>
    <property type="project" value="TreeGrafter"/>
</dbReference>
<dbReference type="GO" id="GO:0006412">
    <property type="term" value="P:translation"/>
    <property type="evidence" value="ECO:0007669"/>
    <property type="project" value="UniProtKB-UniRule"/>
</dbReference>
<dbReference type="CDD" id="cd00165">
    <property type="entry name" value="S4"/>
    <property type="match status" value="1"/>
</dbReference>
<dbReference type="FunFam" id="3.10.290.10:FF:000001">
    <property type="entry name" value="30S ribosomal protein S4"/>
    <property type="match status" value="1"/>
</dbReference>
<dbReference type="Gene3D" id="1.10.1050.10">
    <property type="entry name" value="Ribosomal Protein S4 Delta 41, Chain A, domain 1"/>
    <property type="match status" value="1"/>
</dbReference>
<dbReference type="Gene3D" id="3.10.290.10">
    <property type="entry name" value="RNA-binding S4 domain"/>
    <property type="match status" value="1"/>
</dbReference>
<dbReference type="HAMAP" id="MF_01306_B">
    <property type="entry name" value="Ribosomal_uS4_B"/>
    <property type="match status" value="1"/>
</dbReference>
<dbReference type="InterPro" id="IPR022801">
    <property type="entry name" value="Ribosomal_uS4"/>
</dbReference>
<dbReference type="InterPro" id="IPR005709">
    <property type="entry name" value="Ribosomal_uS4_bac-type"/>
</dbReference>
<dbReference type="InterPro" id="IPR018079">
    <property type="entry name" value="Ribosomal_uS4_CS"/>
</dbReference>
<dbReference type="InterPro" id="IPR001912">
    <property type="entry name" value="Ribosomal_uS4_N"/>
</dbReference>
<dbReference type="InterPro" id="IPR002942">
    <property type="entry name" value="S4_RNA-bd"/>
</dbReference>
<dbReference type="InterPro" id="IPR036986">
    <property type="entry name" value="S4_RNA-bd_sf"/>
</dbReference>
<dbReference type="NCBIfam" id="NF003717">
    <property type="entry name" value="PRK05327.1"/>
    <property type="match status" value="1"/>
</dbReference>
<dbReference type="NCBIfam" id="TIGR01017">
    <property type="entry name" value="rpsD_bact"/>
    <property type="match status" value="1"/>
</dbReference>
<dbReference type="PANTHER" id="PTHR11831">
    <property type="entry name" value="30S 40S RIBOSOMAL PROTEIN"/>
    <property type="match status" value="1"/>
</dbReference>
<dbReference type="PANTHER" id="PTHR11831:SF4">
    <property type="entry name" value="SMALL RIBOSOMAL SUBUNIT PROTEIN US4M"/>
    <property type="match status" value="1"/>
</dbReference>
<dbReference type="Pfam" id="PF00163">
    <property type="entry name" value="Ribosomal_S4"/>
    <property type="match status" value="1"/>
</dbReference>
<dbReference type="Pfam" id="PF01479">
    <property type="entry name" value="S4"/>
    <property type="match status" value="1"/>
</dbReference>
<dbReference type="SMART" id="SM01390">
    <property type="entry name" value="Ribosomal_S4"/>
    <property type="match status" value="1"/>
</dbReference>
<dbReference type="SMART" id="SM00363">
    <property type="entry name" value="S4"/>
    <property type="match status" value="1"/>
</dbReference>
<dbReference type="SUPFAM" id="SSF55174">
    <property type="entry name" value="Alpha-L RNA-binding motif"/>
    <property type="match status" value="1"/>
</dbReference>
<dbReference type="PROSITE" id="PS00632">
    <property type="entry name" value="RIBOSOMAL_S4"/>
    <property type="match status" value="1"/>
</dbReference>
<dbReference type="PROSITE" id="PS50889">
    <property type="entry name" value="S4"/>
    <property type="match status" value="1"/>
</dbReference>
<comment type="function">
    <text evidence="1">One of the primary rRNA binding proteins, it binds directly to 16S rRNA where it nucleates assembly of the body of the 30S subunit.</text>
</comment>
<comment type="function">
    <text evidence="1">With S5 and S12 plays an important role in translational accuracy.</text>
</comment>
<comment type="subunit">
    <text evidence="1">Part of the 30S ribosomal subunit. Contacts protein S5. The interaction surface between S4 and S5 is involved in control of translational fidelity.</text>
</comment>
<comment type="similarity">
    <text evidence="1">Belongs to the universal ribosomal protein uS4 family.</text>
</comment>
<gene>
    <name evidence="1" type="primary">rpsD</name>
    <name type="ordered locus">UUR10_0566</name>
</gene>
<keyword id="KW-0687">Ribonucleoprotein</keyword>
<keyword id="KW-0689">Ribosomal protein</keyword>
<keyword id="KW-0694">RNA-binding</keyword>
<keyword id="KW-0699">rRNA-binding</keyword>